<organism>
    <name type="scientific">Yersinia pseudotuberculosis serotype I (strain IP32953)</name>
    <dbReference type="NCBI Taxonomy" id="273123"/>
    <lineage>
        <taxon>Bacteria</taxon>
        <taxon>Pseudomonadati</taxon>
        <taxon>Pseudomonadota</taxon>
        <taxon>Gammaproteobacteria</taxon>
        <taxon>Enterobacterales</taxon>
        <taxon>Yersiniaceae</taxon>
        <taxon>Yersinia</taxon>
    </lineage>
</organism>
<gene>
    <name evidence="1" type="primary">rnhB</name>
    <name type="ordered locus">YPTB2989</name>
</gene>
<keyword id="KW-0963">Cytoplasm</keyword>
<keyword id="KW-0255">Endonuclease</keyword>
<keyword id="KW-0378">Hydrolase</keyword>
<keyword id="KW-0464">Manganese</keyword>
<keyword id="KW-0479">Metal-binding</keyword>
<keyword id="KW-0540">Nuclease</keyword>
<evidence type="ECO:0000255" key="1">
    <source>
        <dbReference type="HAMAP-Rule" id="MF_00052"/>
    </source>
</evidence>
<evidence type="ECO:0000255" key="2">
    <source>
        <dbReference type="PROSITE-ProRule" id="PRU01319"/>
    </source>
</evidence>
<proteinExistence type="inferred from homology"/>
<feature type="chain" id="PRO_0000111659" description="Ribonuclease HII">
    <location>
        <begin position="1"/>
        <end position="198"/>
    </location>
</feature>
<feature type="domain" description="RNase H type-2" evidence="2">
    <location>
        <begin position="11"/>
        <end position="198"/>
    </location>
</feature>
<feature type="binding site" evidence="1">
    <location>
        <position position="17"/>
    </location>
    <ligand>
        <name>a divalent metal cation</name>
        <dbReference type="ChEBI" id="CHEBI:60240"/>
    </ligand>
</feature>
<feature type="binding site" evidence="1">
    <location>
        <position position="18"/>
    </location>
    <ligand>
        <name>a divalent metal cation</name>
        <dbReference type="ChEBI" id="CHEBI:60240"/>
    </ligand>
</feature>
<feature type="binding site" evidence="1">
    <location>
        <position position="109"/>
    </location>
    <ligand>
        <name>a divalent metal cation</name>
        <dbReference type="ChEBI" id="CHEBI:60240"/>
    </ligand>
</feature>
<reference key="1">
    <citation type="journal article" date="2004" name="Proc. Natl. Acad. Sci. U.S.A.">
        <title>Insights into the evolution of Yersinia pestis through whole-genome comparison with Yersinia pseudotuberculosis.</title>
        <authorList>
            <person name="Chain P.S.G."/>
            <person name="Carniel E."/>
            <person name="Larimer F.W."/>
            <person name="Lamerdin J."/>
            <person name="Stoutland P.O."/>
            <person name="Regala W.M."/>
            <person name="Georgescu A.M."/>
            <person name="Vergez L.M."/>
            <person name="Land M.L."/>
            <person name="Motin V.L."/>
            <person name="Brubaker R.R."/>
            <person name="Fowler J."/>
            <person name="Hinnebusch J."/>
            <person name="Marceau M."/>
            <person name="Medigue C."/>
            <person name="Simonet M."/>
            <person name="Chenal-Francisque V."/>
            <person name="Souza B."/>
            <person name="Dacheux D."/>
            <person name="Elliott J.M."/>
            <person name="Derbise A."/>
            <person name="Hauser L.J."/>
            <person name="Garcia E."/>
        </authorList>
    </citation>
    <scope>NUCLEOTIDE SEQUENCE [LARGE SCALE GENOMIC DNA]</scope>
    <source>
        <strain>IP32953</strain>
    </source>
</reference>
<dbReference type="EC" id="3.1.26.4" evidence="1"/>
<dbReference type="EMBL" id="BX936398">
    <property type="protein sequence ID" value="CAH22227.1"/>
    <property type="molecule type" value="Genomic_DNA"/>
</dbReference>
<dbReference type="RefSeq" id="WP_002212145.1">
    <property type="nucleotide sequence ID" value="NZ_CP009712.1"/>
</dbReference>
<dbReference type="SMR" id="Q667K3"/>
<dbReference type="GeneID" id="57977503"/>
<dbReference type="KEGG" id="ypo:BZ17_3632"/>
<dbReference type="KEGG" id="yps:YPTB2989"/>
<dbReference type="PATRIC" id="fig|273123.14.peg.3813"/>
<dbReference type="Proteomes" id="UP000001011">
    <property type="component" value="Chromosome"/>
</dbReference>
<dbReference type="GO" id="GO:0005737">
    <property type="term" value="C:cytoplasm"/>
    <property type="evidence" value="ECO:0007669"/>
    <property type="project" value="UniProtKB-SubCell"/>
</dbReference>
<dbReference type="GO" id="GO:0032299">
    <property type="term" value="C:ribonuclease H2 complex"/>
    <property type="evidence" value="ECO:0007669"/>
    <property type="project" value="TreeGrafter"/>
</dbReference>
<dbReference type="GO" id="GO:0030145">
    <property type="term" value="F:manganese ion binding"/>
    <property type="evidence" value="ECO:0007669"/>
    <property type="project" value="UniProtKB-UniRule"/>
</dbReference>
<dbReference type="GO" id="GO:0003723">
    <property type="term" value="F:RNA binding"/>
    <property type="evidence" value="ECO:0007669"/>
    <property type="project" value="InterPro"/>
</dbReference>
<dbReference type="GO" id="GO:0004523">
    <property type="term" value="F:RNA-DNA hybrid ribonuclease activity"/>
    <property type="evidence" value="ECO:0007669"/>
    <property type="project" value="UniProtKB-UniRule"/>
</dbReference>
<dbReference type="GO" id="GO:0043137">
    <property type="term" value="P:DNA replication, removal of RNA primer"/>
    <property type="evidence" value="ECO:0007669"/>
    <property type="project" value="TreeGrafter"/>
</dbReference>
<dbReference type="GO" id="GO:0006298">
    <property type="term" value="P:mismatch repair"/>
    <property type="evidence" value="ECO:0007669"/>
    <property type="project" value="TreeGrafter"/>
</dbReference>
<dbReference type="CDD" id="cd07182">
    <property type="entry name" value="RNase_HII_bacteria_HII_like"/>
    <property type="match status" value="1"/>
</dbReference>
<dbReference type="FunFam" id="3.30.420.10:FF:000006">
    <property type="entry name" value="Ribonuclease HII"/>
    <property type="match status" value="1"/>
</dbReference>
<dbReference type="Gene3D" id="3.30.420.10">
    <property type="entry name" value="Ribonuclease H-like superfamily/Ribonuclease H"/>
    <property type="match status" value="1"/>
</dbReference>
<dbReference type="HAMAP" id="MF_00052_B">
    <property type="entry name" value="RNase_HII_B"/>
    <property type="match status" value="1"/>
</dbReference>
<dbReference type="InterPro" id="IPR022898">
    <property type="entry name" value="RNase_HII"/>
</dbReference>
<dbReference type="InterPro" id="IPR001352">
    <property type="entry name" value="RNase_HII/HIII"/>
</dbReference>
<dbReference type="InterPro" id="IPR024567">
    <property type="entry name" value="RNase_HII/HIII_dom"/>
</dbReference>
<dbReference type="InterPro" id="IPR012337">
    <property type="entry name" value="RNaseH-like_sf"/>
</dbReference>
<dbReference type="InterPro" id="IPR036397">
    <property type="entry name" value="RNaseH_sf"/>
</dbReference>
<dbReference type="NCBIfam" id="NF000594">
    <property type="entry name" value="PRK00015.1-1"/>
    <property type="match status" value="1"/>
</dbReference>
<dbReference type="NCBIfam" id="NF000595">
    <property type="entry name" value="PRK00015.1-3"/>
    <property type="match status" value="1"/>
</dbReference>
<dbReference type="NCBIfam" id="NF000596">
    <property type="entry name" value="PRK00015.1-4"/>
    <property type="match status" value="1"/>
</dbReference>
<dbReference type="PANTHER" id="PTHR10954">
    <property type="entry name" value="RIBONUCLEASE H2 SUBUNIT A"/>
    <property type="match status" value="1"/>
</dbReference>
<dbReference type="PANTHER" id="PTHR10954:SF18">
    <property type="entry name" value="RIBONUCLEASE HII"/>
    <property type="match status" value="1"/>
</dbReference>
<dbReference type="Pfam" id="PF01351">
    <property type="entry name" value="RNase_HII"/>
    <property type="match status" value="1"/>
</dbReference>
<dbReference type="SUPFAM" id="SSF53098">
    <property type="entry name" value="Ribonuclease H-like"/>
    <property type="match status" value="1"/>
</dbReference>
<dbReference type="PROSITE" id="PS51975">
    <property type="entry name" value="RNASE_H_2"/>
    <property type="match status" value="1"/>
</dbReference>
<accession>Q667K3</accession>
<protein>
    <recommendedName>
        <fullName evidence="1">Ribonuclease HII</fullName>
        <shortName evidence="1">RNase HII</shortName>
        <ecNumber evidence="1">3.1.26.4</ecNumber>
    </recommendedName>
</protein>
<name>RNH2_YERPS</name>
<sequence length="198" mass="21648">MSETFIYPQANLIAGVDEVGRGPLVGAVVTAAVILDPNRPIVGLADSKKLSEKRRLSLYDEITEKALSWSLGRAEPEEIDQLNILHATMLAMQRAVSGLHIVPDYVLIDGNRCPKLQMPSLAVVKGDSRVAEISAASILAKVTRDREMTELDLLFPEYGFAQHKGYPTAFHLEKLAALGATVHHRRSFGPVKRVLGLV</sequence>
<comment type="function">
    <text evidence="1">Endonuclease that specifically degrades the RNA of RNA-DNA hybrids.</text>
</comment>
<comment type="catalytic activity">
    <reaction evidence="1">
        <text>Endonucleolytic cleavage to 5'-phosphomonoester.</text>
        <dbReference type="EC" id="3.1.26.4"/>
    </reaction>
</comment>
<comment type="cofactor">
    <cofactor evidence="1">
        <name>Mn(2+)</name>
        <dbReference type="ChEBI" id="CHEBI:29035"/>
    </cofactor>
    <cofactor evidence="1">
        <name>Mg(2+)</name>
        <dbReference type="ChEBI" id="CHEBI:18420"/>
    </cofactor>
    <text evidence="1">Manganese or magnesium. Binds 1 divalent metal ion per monomer in the absence of substrate. May bind a second metal ion after substrate binding.</text>
</comment>
<comment type="subcellular location">
    <subcellularLocation>
        <location evidence="1">Cytoplasm</location>
    </subcellularLocation>
</comment>
<comment type="similarity">
    <text evidence="1">Belongs to the RNase HII family.</text>
</comment>